<sequence>MASTEGANNMPKQVEVRMHDSHLSSEEPKHRNLGMRMCDKLGKNLLLSLTVFGVILGAVCGGLLRLAAPIHPDVVMLIAFPGDILMRMLKMLILPLIISSLITGLSGLDAKASGRLGTRAMVYYMSTTIIAAVLGVILVLAIHPGNPKLKKQLGPGKKNDEVSSLDAFLDLIRNLFPENLVQACFQQIQTVTKKVLVAPPSEEANTTKAVISLLNETMNEAPEETKIVIKKGLEFKDGMNVLGLIGFFIAFGIAMGKMGEQAKLMVEFFNILNEIVMKLVIMIMWYSPLGIACLICGKIIAIKDLEVVARQLGMYMITVIVGLIIHGGIFLPLIYFVVTRKNPFSFFAGIFQAWITALGTASSAGTLPVTFRCLEDNLGIDKRVTRFVLPVGATINMDGTALYEAVAAIFIAQMNGVILDGGQIVTVSLTATLASIGAASIPSAGLVTMLLILTAVGLPTEDISLLVAVDWLLDRMRTSVNVVGDSFGAGIVYHLSKSELDTIDSQHRMHEDIEMTKTQSVYDDTKNHRESNSNQCVYAAHNSVVIDECKVTLAANGKSADCSVEEEPWKREK</sequence>
<feature type="chain" id="PRO_0000202063" description="Excitatory amino acid transporter 2">
    <location>
        <begin position="1"/>
        <end position="573"/>
    </location>
</feature>
<feature type="topological domain" description="Cytoplasmic" evidence="6">
    <location>
        <begin position="1"/>
        <end position="44"/>
    </location>
</feature>
<feature type="transmembrane region" description="Helical" evidence="6">
    <location>
        <begin position="45"/>
        <end position="64"/>
    </location>
</feature>
<feature type="transmembrane region" description="Helical" evidence="6">
    <location>
        <begin position="88"/>
        <end position="108"/>
    </location>
</feature>
<feature type="transmembrane region" description="Helical" evidence="6">
    <location>
        <begin position="121"/>
        <end position="142"/>
    </location>
</feature>
<feature type="transmembrane region" description="Helical; Name=4" evidence="2">
    <location>
        <begin position="235"/>
        <end position="258"/>
    </location>
</feature>
<feature type="transmembrane region" description="Helical; Name=5" evidence="2">
    <location>
        <begin position="268"/>
        <end position="295"/>
    </location>
</feature>
<feature type="transmembrane region" description="Helical; Name=6" evidence="2">
    <location>
        <begin position="317"/>
        <end position="338"/>
    </location>
</feature>
<feature type="intramembrane region" description="Discontinuously helical" evidence="2">
    <location>
        <begin position="344"/>
        <end position="374"/>
    </location>
</feature>
<feature type="transmembrane region" description="Helical; Name=7" evidence="2">
    <location>
        <begin position="384"/>
        <end position="410"/>
    </location>
</feature>
<feature type="intramembrane region" description="Discontinuously helical" evidence="2">
    <location>
        <begin position="424"/>
        <end position="457"/>
    </location>
</feature>
<feature type="transmembrane region" description="Helical; Name=8" evidence="2">
    <location>
        <begin position="471"/>
        <end position="492"/>
    </location>
</feature>
<feature type="region of interest" description="Disordered" evidence="7">
    <location>
        <begin position="1"/>
        <end position="29"/>
    </location>
</feature>
<feature type="compositionally biased region" description="Polar residues" evidence="7">
    <location>
        <begin position="1"/>
        <end position="11"/>
    </location>
</feature>
<feature type="compositionally biased region" description="Basic and acidic residues" evidence="7">
    <location>
        <begin position="14"/>
        <end position="29"/>
    </location>
</feature>
<feature type="binding site" evidence="2">
    <location>
        <begin position="361"/>
        <end position="363"/>
    </location>
    <ligand>
        <name>L-aspartate</name>
        <dbReference type="ChEBI" id="CHEBI:29991"/>
    </ligand>
</feature>
<feature type="binding site" evidence="1">
    <location>
        <position position="392"/>
    </location>
    <ligand>
        <name>Na(+)</name>
        <dbReference type="ChEBI" id="CHEBI:29101"/>
        <label>1</label>
    </ligand>
</feature>
<feature type="binding site" evidence="2">
    <location>
        <position position="394"/>
    </location>
    <ligand>
        <name>Na(+)</name>
        <dbReference type="ChEBI" id="CHEBI:29101"/>
        <label>2</label>
    </ligand>
</feature>
<feature type="binding site" evidence="1">
    <location>
        <position position="396"/>
    </location>
    <ligand>
        <name>Na(+)</name>
        <dbReference type="ChEBI" id="CHEBI:29101"/>
        <label>1</label>
    </ligand>
</feature>
<feature type="binding site" evidence="2">
    <location>
        <position position="400"/>
    </location>
    <ligand>
        <name>L-aspartate</name>
        <dbReference type="ChEBI" id="CHEBI:29991"/>
    </ligand>
</feature>
<feature type="binding site" evidence="2">
    <location>
        <begin position="441"/>
        <end position="445"/>
    </location>
    <ligand>
        <name>L-aspartate</name>
        <dbReference type="ChEBI" id="CHEBI:29991"/>
    </ligand>
</feature>
<feature type="binding site" evidence="2">
    <location>
        <position position="474"/>
    </location>
    <ligand>
        <name>L-aspartate</name>
        <dbReference type="ChEBI" id="CHEBI:29991"/>
    </ligand>
</feature>
<feature type="binding site" evidence="2">
    <location>
        <position position="481"/>
    </location>
    <ligand>
        <name>L-aspartate</name>
        <dbReference type="ChEBI" id="CHEBI:29991"/>
    </ligand>
</feature>
<feature type="binding site" evidence="1">
    <location>
        <position position="481"/>
    </location>
    <ligand>
        <name>Na(+)</name>
        <dbReference type="ChEBI" id="CHEBI:29101"/>
        <label>1</label>
    </ligand>
</feature>
<feature type="binding site" evidence="1">
    <location>
        <position position="485"/>
    </location>
    <ligand>
        <name>Na(+)</name>
        <dbReference type="ChEBI" id="CHEBI:29101"/>
        <label>1</label>
    </ligand>
</feature>
<feature type="modified residue" description="Phosphoserine" evidence="15">
    <location>
        <position position="3"/>
    </location>
</feature>
<feature type="modified residue" description="Phosphoserine" evidence="15">
    <location>
        <position position="21"/>
    </location>
</feature>
<feature type="modified residue" description="Phosphoserine" evidence="15">
    <location>
        <position position="24"/>
    </location>
</feature>
<feature type="modified residue" description="Phosphoserine" evidence="15">
    <location>
        <position position="25"/>
    </location>
</feature>
<feature type="modified residue" description="Phosphoserine" evidence="15">
    <location>
        <position position="505"/>
    </location>
</feature>
<feature type="modified residue" description="Phosphoserine" evidence="5">
    <location>
        <position position="520"/>
    </location>
</feature>
<feature type="modified residue" description="Phosphoserine" evidence="5">
    <location>
        <position position="531"/>
    </location>
</feature>
<feature type="modified residue" description="Phosphoserine" evidence="5">
    <location>
        <position position="533"/>
    </location>
</feature>
<feature type="modified residue" description="Phosphotyrosine" evidence="5">
    <location>
        <position position="538"/>
    </location>
</feature>
<feature type="modified residue" description="Phosphoserine" evidence="5">
    <location>
        <position position="543"/>
    </location>
</feature>
<feature type="modified residue" description="Phosphoserine" evidence="5">
    <location>
        <position position="559"/>
    </location>
</feature>
<feature type="modified residue" description="Phosphoserine" evidence="5">
    <location>
        <position position="563"/>
    </location>
</feature>
<feature type="lipid moiety-binding region" description="S-palmitoyl cysteine" evidence="5">
    <location>
        <position position="38"/>
    </location>
</feature>
<feature type="glycosylation site" description="N-linked (GlcNAc...) asparagine" evidence="6">
    <location>
        <position position="205"/>
    </location>
</feature>
<feature type="glycosylation site" description="N-linked (GlcNAc...) asparagine" evidence="6">
    <location>
        <position position="215"/>
    </location>
</feature>
<feature type="splice variant" id="VSP_006266" description="In isoform Glt-1A." evidence="11">
    <original>MASTEG</original>
    <variation>MVS</variation>
    <location>
        <begin position="1"/>
        <end position="6"/>
    </location>
</feature>
<feature type="mutagenesis site" description="Normal transporter activity." evidence="10">
    <original>K</original>
    <variation>H</variation>
    <variation>R</variation>
    <location>
        <position position="298"/>
    </location>
</feature>
<feature type="mutagenesis site" description="Reduced transporter activity." evidence="10">
    <original>K</original>
    <variation>N</variation>
    <variation>T</variation>
    <location>
        <position position="298"/>
    </location>
</feature>
<feature type="mutagenesis site" description="No transporter activity." evidence="10">
    <original>H</original>
    <variation>N</variation>
    <variation>T</variation>
    <variation>K</variation>
    <variation>R</variation>
    <location>
        <position position="326"/>
    </location>
</feature>
<feature type="sequence conflict" description="In Ref. 4; AAA93061/AAA93062." evidence="14" ref="4">
    <original>V</original>
    <variation>I</variation>
    <location>
        <position position="521"/>
    </location>
</feature>
<evidence type="ECO:0000250" key="1">
    <source>
        <dbReference type="UniProtKB" id="O59010"/>
    </source>
</evidence>
<evidence type="ECO:0000250" key="2">
    <source>
        <dbReference type="UniProtKB" id="P43003"/>
    </source>
</evidence>
<evidence type="ECO:0000250" key="3">
    <source>
        <dbReference type="UniProtKB" id="P43004"/>
    </source>
</evidence>
<evidence type="ECO:0000250" key="4">
    <source>
        <dbReference type="UniProtKB" id="P43005"/>
    </source>
</evidence>
<evidence type="ECO:0000250" key="5">
    <source>
        <dbReference type="UniProtKB" id="P43006"/>
    </source>
</evidence>
<evidence type="ECO:0000255" key="6"/>
<evidence type="ECO:0000256" key="7">
    <source>
        <dbReference type="SAM" id="MobiDB-lite"/>
    </source>
</evidence>
<evidence type="ECO:0000269" key="8">
    <source>
    </source>
</evidence>
<evidence type="ECO:0000269" key="9">
    <source>
    </source>
</evidence>
<evidence type="ECO:0000269" key="10">
    <source>
    </source>
</evidence>
<evidence type="ECO:0000303" key="11">
    <source>
    </source>
</evidence>
<evidence type="ECO:0000303" key="12">
    <source>
    </source>
</evidence>
<evidence type="ECO:0000303" key="13">
    <source>
    </source>
</evidence>
<evidence type="ECO:0000305" key="14"/>
<evidence type="ECO:0007744" key="15">
    <source>
    </source>
</evidence>
<dbReference type="EMBL" id="X67857">
    <property type="protein sequence ID" value="CAA48042.1"/>
    <property type="status" value="ALT_SEQ"/>
    <property type="molecule type" value="mRNA"/>
</dbReference>
<dbReference type="EMBL" id="U15098">
    <property type="protein sequence ID" value="AAA93061.1"/>
    <property type="molecule type" value="mRNA"/>
</dbReference>
<dbReference type="EMBL" id="U15098">
    <property type="protein sequence ID" value="AAA93062.1"/>
    <property type="status" value="ALT_INIT"/>
    <property type="molecule type" value="mRNA"/>
</dbReference>
<dbReference type="EMBL" id="AF297648">
    <property type="protein sequence ID" value="AAG13411.1"/>
    <property type="molecule type" value="mRNA"/>
</dbReference>
<dbReference type="PIR" id="S28901">
    <property type="entry name" value="S28901"/>
</dbReference>
<dbReference type="RefSeq" id="NP_001289018.1">
    <property type="nucleotide sequence ID" value="NM_001302089.1"/>
</dbReference>
<dbReference type="RefSeq" id="NP_058911.2">
    <property type="nucleotide sequence ID" value="NM_017215.2"/>
</dbReference>
<dbReference type="SMR" id="P31596"/>
<dbReference type="BioGRID" id="248124">
    <property type="interactions" value="4"/>
</dbReference>
<dbReference type="CORUM" id="P31596"/>
<dbReference type="FunCoup" id="P31596">
    <property type="interactions" value="1016"/>
</dbReference>
<dbReference type="IntAct" id="P31596">
    <property type="interactions" value="3"/>
</dbReference>
<dbReference type="MINT" id="P31596"/>
<dbReference type="STRING" id="10116.ENSRNOP00000007604"/>
<dbReference type="ChEMBL" id="CHEMBL2900"/>
<dbReference type="GuidetoPHARMACOLOGY" id="869"/>
<dbReference type="TCDB" id="2.A.23.2.2">
    <property type="family name" value="the dicarboxylate/amino acid:cation (na(+) or h(+)) symporter (daacs) family"/>
</dbReference>
<dbReference type="CarbonylDB" id="P31596"/>
<dbReference type="GlyCosmos" id="P31596">
    <property type="glycosylation" value="2 sites, 8 glycans"/>
</dbReference>
<dbReference type="GlyGen" id="P31596">
    <property type="glycosylation" value="2 sites, 21 N-linked glycans (2 sites)"/>
</dbReference>
<dbReference type="iPTMnet" id="P31596"/>
<dbReference type="PhosphoSitePlus" id="P31596"/>
<dbReference type="SwissPalm" id="P31596"/>
<dbReference type="PaxDb" id="10116-ENSRNOP00000007604"/>
<dbReference type="GeneID" id="29482"/>
<dbReference type="KEGG" id="rno:29482"/>
<dbReference type="UCSC" id="RGD:3697">
    <molecule id="P31596-1"/>
    <property type="organism name" value="rat"/>
</dbReference>
<dbReference type="AGR" id="RGD:3697"/>
<dbReference type="CTD" id="6506"/>
<dbReference type="RGD" id="3697">
    <property type="gene designation" value="Slc1a2"/>
</dbReference>
<dbReference type="eggNOG" id="KOG3787">
    <property type="taxonomic scope" value="Eukaryota"/>
</dbReference>
<dbReference type="InParanoid" id="P31596"/>
<dbReference type="OrthoDB" id="58814at9989"/>
<dbReference type="PhylomeDB" id="P31596"/>
<dbReference type="TreeFam" id="TF315206"/>
<dbReference type="Reactome" id="R-RNO-210455">
    <property type="pathway name" value="Astrocytic Glutamate-Glutamine Uptake And Metabolism"/>
</dbReference>
<dbReference type="Reactome" id="R-RNO-210500">
    <property type="pathway name" value="Glutamate Neurotransmitter Release Cycle"/>
</dbReference>
<dbReference type="Reactome" id="R-RNO-425393">
    <property type="pathway name" value="Transport of inorganic cations/anions and amino acids/oligopeptides"/>
</dbReference>
<dbReference type="PRO" id="PR:P31596"/>
<dbReference type="Proteomes" id="UP000002494">
    <property type="component" value="Unplaced"/>
</dbReference>
<dbReference type="GO" id="GO:0097449">
    <property type="term" value="C:astrocyte projection"/>
    <property type="evidence" value="ECO:0000314"/>
    <property type="project" value="ARUK-UCL"/>
</dbReference>
<dbReference type="GO" id="GO:0030673">
    <property type="term" value="C:axolemma"/>
    <property type="evidence" value="ECO:0000266"/>
    <property type="project" value="RGD"/>
</dbReference>
<dbReference type="GO" id="GO:0030424">
    <property type="term" value="C:axon"/>
    <property type="evidence" value="ECO:0000266"/>
    <property type="project" value="RGD"/>
</dbReference>
<dbReference type="GO" id="GO:0044297">
    <property type="term" value="C:cell body"/>
    <property type="evidence" value="ECO:0000314"/>
    <property type="project" value="ARUK-UCL"/>
</dbReference>
<dbReference type="GO" id="GO:0009986">
    <property type="term" value="C:cell surface"/>
    <property type="evidence" value="ECO:0000266"/>
    <property type="project" value="RGD"/>
</dbReference>
<dbReference type="GO" id="GO:0043198">
    <property type="term" value="C:dendritic shaft"/>
    <property type="evidence" value="ECO:0000314"/>
    <property type="project" value="RGD"/>
</dbReference>
<dbReference type="GO" id="GO:0043197">
    <property type="term" value="C:dendritic spine"/>
    <property type="evidence" value="ECO:0000314"/>
    <property type="project" value="RGD"/>
</dbReference>
<dbReference type="GO" id="GO:0098978">
    <property type="term" value="C:glutamatergic synapse"/>
    <property type="evidence" value="ECO:0000266"/>
    <property type="project" value="RGD"/>
</dbReference>
<dbReference type="GO" id="GO:0016020">
    <property type="term" value="C:membrane"/>
    <property type="evidence" value="ECO:0000266"/>
    <property type="project" value="RGD"/>
</dbReference>
<dbReference type="GO" id="GO:0098796">
    <property type="term" value="C:membrane protein complex"/>
    <property type="evidence" value="ECO:0000314"/>
    <property type="project" value="ARUK-UCL"/>
</dbReference>
<dbReference type="GO" id="GO:0045121">
    <property type="term" value="C:membrane raft"/>
    <property type="evidence" value="ECO:0000266"/>
    <property type="project" value="RGD"/>
</dbReference>
<dbReference type="GO" id="GO:0044306">
    <property type="term" value="C:neuron projection terminus"/>
    <property type="evidence" value="ECO:0000266"/>
    <property type="project" value="RGD"/>
</dbReference>
<dbReference type="GO" id="GO:0005886">
    <property type="term" value="C:plasma membrane"/>
    <property type="evidence" value="ECO:0000315"/>
    <property type="project" value="UniProtKB"/>
</dbReference>
<dbReference type="GO" id="GO:0042734">
    <property type="term" value="C:presynaptic membrane"/>
    <property type="evidence" value="ECO:0000314"/>
    <property type="project" value="RGD"/>
</dbReference>
<dbReference type="GO" id="GO:0045202">
    <property type="term" value="C:synapse"/>
    <property type="evidence" value="ECO:0000266"/>
    <property type="project" value="RGD"/>
</dbReference>
<dbReference type="GO" id="GO:0031982">
    <property type="term" value="C:vesicle"/>
    <property type="evidence" value="ECO:0000266"/>
    <property type="project" value="RGD"/>
</dbReference>
<dbReference type="GO" id="GO:0033229">
    <property type="term" value="F:cysteine transmembrane transporter activity"/>
    <property type="evidence" value="ECO:0000266"/>
    <property type="project" value="RGD"/>
</dbReference>
<dbReference type="GO" id="GO:0015501">
    <property type="term" value="F:glutamate:sodium symporter activity"/>
    <property type="evidence" value="ECO:0000314"/>
    <property type="project" value="UniProtKB"/>
</dbReference>
<dbReference type="GO" id="GO:0005314">
    <property type="term" value="F:high-affinity L-glutamate transmembrane transporter activity"/>
    <property type="evidence" value="ECO:0000314"/>
    <property type="project" value="UniProtKB"/>
</dbReference>
<dbReference type="GO" id="GO:0005313">
    <property type="term" value="F:L-glutamate transmembrane transporter activity"/>
    <property type="evidence" value="ECO:0000266"/>
    <property type="project" value="RGD"/>
</dbReference>
<dbReference type="GO" id="GO:0046872">
    <property type="term" value="F:metal ion binding"/>
    <property type="evidence" value="ECO:0007669"/>
    <property type="project" value="UniProtKB-KW"/>
</dbReference>
<dbReference type="GO" id="GO:0008509">
    <property type="term" value="F:monoatomic anion transmembrane transporter activity"/>
    <property type="evidence" value="ECO:0000266"/>
    <property type="project" value="RGD"/>
</dbReference>
<dbReference type="GO" id="GO:0015175">
    <property type="term" value="F:neutral L-amino acid transmembrane transporter activity"/>
    <property type="evidence" value="ECO:0000318"/>
    <property type="project" value="GO_Central"/>
</dbReference>
<dbReference type="GO" id="GO:0030534">
    <property type="term" value="P:adult behavior"/>
    <property type="evidence" value="ECO:0000266"/>
    <property type="project" value="RGD"/>
</dbReference>
<dbReference type="GO" id="GO:0071314">
    <property type="term" value="P:cellular response to cocaine"/>
    <property type="evidence" value="ECO:0000266"/>
    <property type="project" value="RGD"/>
</dbReference>
<dbReference type="GO" id="GO:0070779">
    <property type="term" value="P:D-aspartate import across plasma membrane"/>
    <property type="evidence" value="ECO:0000266"/>
    <property type="project" value="RGD"/>
</dbReference>
<dbReference type="GO" id="GO:0006750">
    <property type="term" value="P:glutathione biosynthetic process"/>
    <property type="evidence" value="ECO:0000266"/>
    <property type="project" value="RGD"/>
</dbReference>
<dbReference type="GO" id="GO:0140009">
    <property type="term" value="P:L-aspartate import across plasma membrane"/>
    <property type="evidence" value="ECO:0000266"/>
    <property type="project" value="RGD"/>
</dbReference>
<dbReference type="GO" id="GO:0070778">
    <property type="term" value="P:L-aspartate transmembrane transport"/>
    <property type="evidence" value="ECO:0000318"/>
    <property type="project" value="GO_Central"/>
</dbReference>
<dbReference type="GO" id="GO:0098712">
    <property type="term" value="P:L-glutamate import across plasma membrane"/>
    <property type="evidence" value="ECO:0000250"/>
    <property type="project" value="UniProtKB"/>
</dbReference>
<dbReference type="GO" id="GO:0015813">
    <property type="term" value="P:L-glutamate transmembrane transport"/>
    <property type="evidence" value="ECO:0000315"/>
    <property type="project" value="RGD"/>
</dbReference>
<dbReference type="GO" id="GO:0098656">
    <property type="term" value="P:monoatomic anion transmembrane transport"/>
    <property type="evidence" value="ECO:0000266"/>
    <property type="project" value="RGD"/>
</dbReference>
<dbReference type="GO" id="GO:0035264">
    <property type="term" value="P:multicellular organism growth"/>
    <property type="evidence" value="ECO:0000266"/>
    <property type="project" value="RGD"/>
</dbReference>
<dbReference type="GO" id="GO:0007399">
    <property type="term" value="P:nervous system development"/>
    <property type="evidence" value="ECO:0000266"/>
    <property type="project" value="RGD"/>
</dbReference>
<dbReference type="GO" id="GO:0098810">
    <property type="term" value="P:neurotransmitter reuptake"/>
    <property type="evidence" value="ECO:0000266"/>
    <property type="project" value="RGD"/>
</dbReference>
<dbReference type="GO" id="GO:0006836">
    <property type="term" value="P:neurotransmitter transport"/>
    <property type="evidence" value="ECO:0000304"/>
    <property type="project" value="RGD"/>
</dbReference>
<dbReference type="GO" id="GO:0046326">
    <property type="term" value="P:positive regulation of D-glucose import"/>
    <property type="evidence" value="ECO:0000266"/>
    <property type="project" value="RGD"/>
</dbReference>
<dbReference type="GO" id="GO:0070207">
    <property type="term" value="P:protein homotrimerization"/>
    <property type="evidence" value="ECO:0000250"/>
    <property type="project" value="UniProtKB"/>
</dbReference>
<dbReference type="GO" id="GO:0043200">
    <property type="term" value="P:response to amino acid"/>
    <property type="evidence" value="ECO:0000266"/>
    <property type="project" value="RGD"/>
</dbReference>
<dbReference type="GO" id="GO:0009416">
    <property type="term" value="P:response to light stimulus"/>
    <property type="evidence" value="ECO:0000266"/>
    <property type="project" value="RGD"/>
</dbReference>
<dbReference type="GO" id="GO:0009611">
    <property type="term" value="P:response to wounding"/>
    <property type="evidence" value="ECO:0000266"/>
    <property type="project" value="RGD"/>
</dbReference>
<dbReference type="GO" id="GO:0009410">
    <property type="term" value="P:response to xenobiotic stimulus"/>
    <property type="evidence" value="ECO:0000266"/>
    <property type="project" value="RGD"/>
</dbReference>
<dbReference type="GO" id="GO:0021537">
    <property type="term" value="P:telencephalon development"/>
    <property type="evidence" value="ECO:0000266"/>
    <property type="project" value="RGD"/>
</dbReference>
<dbReference type="GO" id="GO:0007632">
    <property type="term" value="P:visual behavior"/>
    <property type="evidence" value="ECO:0000266"/>
    <property type="project" value="RGD"/>
</dbReference>
<dbReference type="FunFam" id="1.10.3860.10:FF:000002">
    <property type="entry name" value="Amino acid transporter"/>
    <property type="match status" value="1"/>
</dbReference>
<dbReference type="Gene3D" id="1.10.3860.10">
    <property type="entry name" value="Sodium:dicarboxylate symporter"/>
    <property type="match status" value="1"/>
</dbReference>
<dbReference type="InterPro" id="IPR050746">
    <property type="entry name" value="DAACS"/>
</dbReference>
<dbReference type="InterPro" id="IPR001991">
    <property type="entry name" value="Na-dicarboxylate_symporter"/>
</dbReference>
<dbReference type="InterPro" id="IPR018107">
    <property type="entry name" value="Na-dicarboxylate_symporter_CS"/>
</dbReference>
<dbReference type="InterPro" id="IPR036458">
    <property type="entry name" value="Na:dicarbo_symporter_sf"/>
</dbReference>
<dbReference type="PANTHER" id="PTHR11958:SF93">
    <property type="entry name" value="EXCITATORY AMINO ACID TRANSPORTER 2"/>
    <property type="match status" value="1"/>
</dbReference>
<dbReference type="PANTHER" id="PTHR11958">
    <property type="entry name" value="SODIUM/DICARBOXYLATE SYMPORTER-RELATED"/>
    <property type="match status" value="1"/>
</dbReference>
<dbReference type="Pfam" id="PF00375">
    <property type="entry name" value="SDF"/>
    <property type="match status" value="1"/>
</dbReference>
<dbReference type="PRINTS" id="PR00173">
    <property type="entry name" value="EDTRNSPORT"/>
</dbReference>
<dbReference type="SUPFAM" id="SSF118215">
    <property type="entry name" value="Proton glutamate symport protein"/>
    <property type="match status" value="1"/>
</dbReference>
<dbReference type="PROSITE" id="PS00713">
    <property type="entry name" value="NA_DICARBOXYL_SYMP_1"/>
    <property type="match status" value="1"/>
</dbReference>
<dbReference type="PROSITE" id="PS00714">
    <property type="entry name" value="NA_DICARBOXYL_SYMP_2"/>
    <property type="match status" value="1"/>
</dbReference>
<proteinExistence type="evidence at protein level"/>
<organism>
    <name type="scientific">Rattus norvegicus</name>
    <name type="common">Rat</name>
    <dbReference type="NCBI Taxonomy" id="10116"/>
    <lineage>
        <taxon>Eukaryota</taxon>
        <taxon>Metazoa</taxon>
        <taxon>Chordata</taxon>
        <taxon>Craniata</taxon>
        <taxon>Vertebrata</taxon>
        <taxon>Euteleostomi</taxon>
        <taxon>Mammalia</taxon>
        <taxon>Eutheria</taxon>
        <taxon>Euarchontoglires</taxon>
        <taxon>Glires</taxon>
        <taxon>Rodentia</taxon>
        <taxon>Myomorpha</taxon>
        <taxon>Muroidea</taxon>
        <taxon>Muridae</taxon>
        <taxon>Murinae</taxon>
        <taxon>Rattus</taxon>
    </lineage>
</organism>
<keyword id="KW-0025">Alternative splicing</keyword>
<keyword id="KW-0029">Amino-acid transport</keyword>
<keyword id="KW-1003">Cell membrane</keyword>
<keyword id="KW-0868">Chloride</keyword>
<keyword id="KW-0903">Direct protein sequencing</keyword>
<keyword id="KW-0325">Glycoprotein</keyword>
<keyword id="KW-0449">Lipoprotein</keyword>
<keyword id="KW-0472">Membrane</keyword>
<keyword id="KW-0479">Metal-binding</keyword>
<keyword id="KW-0564">Palmitate</keyword>
<keyword id="KW-0597">Phosphoprotein</keyword>
<keyword id="KW-0630">Potassium</keyword>
<keyword id="KW-1185">Reference proteome</keyword>
<keyword id="KW-0915">Sodium</keyword>
<keyword id="KW-0769">Symport</keyword>
<keyword id="KW-0812">Transmembrane</keyword>
<keyword id="KW-1133">Transmembrane helix</keyword>
<keyword id="KW-0813">Transport</keyword>
<protein>
    <recommendedName>
        <fullName>Excitatory amino acid transporter 2</fullName>
    </recommendedName>
    <alternativeName>
        <fullName evidence="12 13">GLT-1</fullName>
    </alternativeName>
    <alternativeName>
        <fullName>Sodium-dependent glutamate/aspartate transporter 2</fullName>
        <shortName>GLUT-R</shortName>
    </alternativeName>
    <alternativeName>
        <fullName>Solute carrier family 1 member 2</fullName>
    </alternativeName>
</protein>
<reference key="1">
    <citation type="journal article" date="1992" name="Nature">
        <title>Cloning and expression of a rat brain L-glutamate transporter.</title>
        <authorList>
            <person name="Pines G."/>
            <person name="Danbolt N.C."/>
            <person name="Bjoeraas M."/>
            <person name="Zhang Y."/>
            <person name="Bendahan A."/>
            <person name="Eide L."/>
            <person name="Koepsell H."/>
            <person name="Storm-Mathisen J."/>
            <person name="Seeberg E."/>
            <person name="Kanner B.I."/>
        </authorList>
    </citation>
    <scope>NUCLEOTIDE SEQUENCE [MRNA]</scope>
    <scope>FUNCTION</scope>
    <scope>SUBCELLULAR LOCATION</scope>
    <scope>TISSUE SPECIFICITY</scope>
    <scope>TRANSPORTER ACTIVITY</scope>
    <source>
        <tissue>Brain</tissue>
    </source>
</reference>
<reference key="2">
    <citation type="journal article" date="1992" name="Nature">
        <authorList>
            <person name="Pines G."/>
            <person name="Danbolt N.C."/>
            <person name="Bjoeraas M."/>
            <person name="Zhang Y."/>
            <person name="Bendahan A."/>
            <person name="Eide L."/>
            <person name="Koepsell H."/>
            <person name="Storm-Mathisen J."/>
            <person name="Seeberg E."/>
            <person name="Kanner B.I."/>
        </authorList>
    </citation>
    <scope>ERRATUM OF PUBMED:1448170</scope>
</reference>
<reference key="3">
    <citation type="journal article" date="1993" name="FEBS Lett.">
        <title>Glutamate transporters from brain. A novel neurotransmitter transporter family.</title>
        <authorList>
            <person name="Kanner B.I."/>
        </authorList>
    </citation>
    <scope>SEQUENCE REVISION TO 260-289</scope>
</reference>
<reference key="4">
    <citation type="submission" date="1995-03" db="EMBL/GenBank/DDBJ databases">
        <authorList>
            <person name="Roginski R.S."/>
            <person name="Choudhury K."/>
            <person name="Meiners S."/>
            <person name="Marone M."/>
            <person name="Basma A.N."/>
            <person name="Geller H.M."/>
        </authorList>
    </citation>
    <scope>NUCLEOTIDE SEQUENCE [MRNA]</scope>
    <source>
        <tissue>Forebrain</tissue>
    </source>
</reference>
<reference key="5">
    <citation type="journal article" date="2000" name="FEBS Lett.">
        <title>The rat hepatoma cell line H4-II-E-C3 expresses high activities of the high-affinity glutamate transporter GLT-1A.</title>
        <authorList>
            <person name="Pollard M."/>
            <person name="McGivan J."/>
        </authorList>
    </citation>
    <scope>NUCLEOTIDE SEQUENCE [MRNA] (ISOFORM GLT-1A)</scope>
    <source>
        <tissue>Hepatoma</tissue>
    </source>
</reference>
<reference key="6">
    <citation type="submission" date="2007-07" db="UniProtKB">
        <authorList>
            <person name="Lubec G."/>
            <person name="Kang S.U."/>
        </authorList>
    </citation>
    <scope>PROTEIN SEQUENCE OF 158-173</scope>
    <scope>IDENTIFICATION BY MASS SPECTROMETRY</scope>
    <source>
        <strain>Sprague-Dawley</strain>
        <tissue>Brain</tissue>
    </source>
</reference>
<reference key="7">
    <citation type="journal article" date="1994" name="J. Biol. Chem.">
        <title>Histidine 326 is critical for the function of GLT-1, a (Na+ + K+)-coupled glutamate transporter from rat brain.</title>
        <authorList>
            <person name="Zhang Y."/>
            <person name="Pines G."/>
            <person name="Kanner B.I."/>
        </authorList>
    </citation>
    <scope>FUNCTION</scope>
    <scope>SUBCELLULAR LOCATION</scope>
    <scope>MUTAGENESIS OF LYS-298 AND HIS-326</scope>
</reference>
<reference key="8">
    <citation type="journal article" date="2002" name="Mol. Cell. Neurosci.">
        <title>The amino terminus of the glial glutamate transporter GLT-1 interacts with the LIM protein Ajuba.</title>
        <authorList>
            <person name="Marie H."/>
            <person name="Billups D."/>
            <person name="Bedford F.K."/>
            <person name="Dumoulin A."/>
            <person name="Goyal R.K."/>
            <person name="Longmore G.D."/>
            <person name="Moss S.J."/>
            <person name="Attwell D."/>
        </authorList>
    </citation>
    <scope>INTERACTION WITH AJUBA</scope>
</reference>
<reference key="9">
    <citation type="journal article" date="2012" name="Nat. Commun.">
        <title>Quantitative maps of protein phosphorylation sites across 14 different rat organs and tissues.</title>
        <authorList>
            <person name="Lundby A."/>
            <person name="Secher A."/>
            <person name="Lage K."/>
            <person name="Nordsborg N.B."/>
            <person name="Dmytriyev A."/>
            <person name="Lundby C."/>
            <person name="Olsen J.V."/>
        </authorList>
    </citation>
    <scope>PHOSPHORYLATION [LARGE SCALE ANALYSIS] AT SER-3; SER-21; SER-24; SER-25 AND SER-505</scope>
    <scope>IDENTIFICATION BY MASS SPECTROMETRY [LARGE SCALE ANALYSIS]</scope>
</reference>
<gene>
    <name type="primary">Slc1a2</name>
    <name type="synonym">Eaat2</name>
    <name type="synonym">Glt1</name>
</gene>
<comment type="function">
    <text evidence="3 5 9 10">Sodium-dependent, high-affinity amino acid transporter that mediates the uptake of L-glutamate and also L-aspartate and D-aspartate (PubMed:1448170, PubMed:7913472). Functions as a symporter that transports one amino acid molecule together with two or three Na(+) ions and one proton, in parallel with the counter-transport of one K(+) ion (PubMed:1448170). Mediates Cl(-) flux that is not coupled to amino acid transport; this avoids the accumulation of negative charges due to aspartate and Na(+) symport (By similarity). Essential for the rapid removal of released glutamate from the synaptic cleft, and for terminating the postsynaptic action of glutamate (By similarity).</text>
</comment>
<comment type="catalytic activity">
    <reaction evidence="9">
        <text>K(+)(in) + L-glutamate(out) + 3 Na(+)(out) + H(+)(out) = K(+)(out) + L-glutamate(in) + 3 Na(+)(in) + H(+)(in)</text>
        <dbReference type="Rhea" id="RHEA:70699"/>
        <dbReference type="ChEBI" id="CHEBI:15378"/>
        <dbReference type="ChEBI" id="CHEBI:29101"/>
        <dbReference type="ChEBI" id="CHEBI:29103"/>
        <dbReference type="ChEBI" id="CHEBI:29985"/>
    </reaction>
</comment>
<comment type="catalytic activity">
    <reaction evidence="4">
        <text>D-aspartate(out) + K(+)(in) + 3 Na(+)(out) + H(+)(out) = D-aspartate(in) + K(+)(out) + 3 Na(+)(in) + H(+)(in)</text>
        <dbReference type="Rhea" id="RHEA:71379"/>
        <dbReference type="ChEBI" id="CHEBI:15378"/>
        <dbReference type="ChEBI" id="CHEBI:29101"/>
        <dbReference type="ChEBI" id="CHEBI:29103"/>
        <dbReference type="ChEBI" id="CHEBI:29990"/>
    </reaction>
</comment>
<comment type="catalytic activity">
    <reaction evidence="3">
        <text>K(+)(in) + L-aspartate(out) + 3 Na(+)(out) + H(+)(out) = K(+)(out) + L-aspartate(in) + 3 Na(+)(in) + H(+)(in)</text>
        <dbReference type="Rhea" id="RHEA:70851"/>
        <dbReference type="ChEBI" id="CHEBI:15378"/>
        <dbReference type="ChEBI" id="CHEBI:29101"/>
        <dbReference type="ChEBI" id="CHEBI:29103"/>
        <dbReference type="ChEBI" id="CHEBI:29991"/>
    </reaction>
</comment>
<comment type="subunit">
    <text evidence="3 8">Homotrimer (By similarity). Interacts with AJUBA (PubMed:11860269).</text>
</comment>
<comment type="subcellular location">
    <subcellularLocation>
        <location evidence="9 10">Cell membrane</location>
        <topology evidence="3">Multi-pass membrane protein</topology>
    </subcellularLocation>
</comment>
<comment type="alternative products">
    <event type="alternative splicing"/>
    <isoform>
        <id>P31596-1</id>
        <name>Glt1</name>
        <sequence type="displayed"/>
    </isoform>
    <isoform>
        <id>P31596-2</id>
        <name>Glt-1A</name>
        <sequence type="described" ref="VSP_006266"/>
    </isoform>
</comment>
<comment type="tissue specificity">
    <text evidence="9">Localized in brain and is highly enriched in the Purkinje cell layer in cerebellum.</text>
</comment>
<comment type="domain">
    <text evidence="2">Contains eight transmembrane regions plus two helical hairpins that dip into the membrane. These helical hairpin structures play an important role in the transport process. The first enters the membrane from the cytoplasmic side, the second one from the extracellular side. During the transport cycle, the regions involved in amino acid transport, and especially the helical hairpins, move vertically by about 15-18 Angstroms, alternating between exposure to the aqueous phase and reinsertion in the lipid bilayer. In contrast, the regions involved in trimerization do not move.</text>
</comment>
<comment type="PTM">
    <text evidence="5">Glycosylated.</text>
</comment>
<comment type="PTM">
    <text evidence="5">Palmitoylation at Cys-38 is not required for correct subcellular localization, but is important for glutamate uptake activity.</text>
</comment>
<comment type="similarity">
    <text evidence="14">Belongs to the dicarboxylate/amino acid:cation symporter (DAACS) (TC 2.A.23) family. SLC1A2 subfamily.</text>
</comment>
<comment type="sequence caution" evidence="14">
    <conflict type="erroneous initiation">
        <sequence resource="EMBL-CDS" id="AAA93062"/>
    </conflict>
</comment>
<accession>P31596</accession>
<name>EAA2_RAT</name>